<organism>
    <name type="scientific">Parasynechococcus marenigrum (strain WH8102)</name>
    <dbReference type="NCBI Taxonomy" id="84588"/>
    <lineage>
        <taxon>Bacteria</taxon>
        <taxon>Bacillati</taxon>
        <taxon>Cyanobacteriota</taxon>
        <taxon>Cyanophyceae</taxon>
        <taxon>Synechococcales</taxon>
        <taxon>Prochlorococcaceae</taxon>
        <taxon>Parasynechococcus</taxon>
        <taxon>Parasynechococcus marenigrum</taxon>
    </lineage>
</organism>
<gene>
    <name evidence="1" type="primary">mnmE</name>
    <name evidence="1" type="synonym">trmE</name>
    <name type="ordered locus">SYNW2322</name>
</gene>
<dbReference type="EC" id="3.6.-.-" evidence="1"/>
<dbReference type="EMBL" id="BX569695">
    <property type="protein sequence ID" value="CAE08837.1"/>
    <property type="molecule type" value="Genomic_DNA"/>
</dbReference>
<dbReference type="RefSeq" id="WP_011129175.1">
    <property type="nucleotide sequence ID" value="NC_005070.1"/>
</dbReference>
<dbReference type="SMR" id="Q7U3V6"/>
<dbReference type="STRING" id="84588.SYNW2322"/>
<dbReference type="KEGG" id="syw:SYNW2322"/>
<dbReference type="eggNOG" id="COG0486">
    <property type="taxonomic scope" value="Bacteria"/>
</dbReference>
<dbReference type="HOGENOM" id="CLU_019624_4_1_3"/>
<dbReference type="Proteomes" id="UP000001422">
    <property type="component" value="Chromosome"/>
</dbReference>
<dbReference type="GO" id="GO:0005829">
    <property type="term" value="C:cytosol"/>
    <property type="evidence" value="ECO:0007669"/>
    <property type="project" value="TreeGrafter"/>
</dbReference>
<dbReference type="GO" id="GO:0005525">
    <property type="term" value="F:GTP binding"/>
    <property type="evidence" value="ECO:0007669"/>
    <property type="project" value="UniProtKB-UniRule"/>
</dbReference>
<dbReference type="GO" id="GO:0003924">
    <property type="term" value="F:GTPase activity"/>
    <property type="evidence" value="ECO:0007669"/>
    <property type="project" value="UniProtKB-UniRule"/>
</dbReference>
<dbReference type="GO" id="GO:0046872">
    <property type="term" value="F:metal ion binding"/>
    <property type="evidence" value="ECO:0007669"/>
    <property type="project" value="UniProtKB-KW"/>
</dbReference>
<dbReference type="GO" id="GO:0030488">
    <property type="term" value="P:tRNA methylation"/>
    <property type="evidence" value="ECO:0007669"/>
    <property type="project" value="TreeGrafter"/>
</dbReference>
<dbReference type="GO" id="GO:0002098">
    <property type="term" value="P:tRNA wobble uridine modification"/>
    <property type="evidence" value="ECO:0007669"/>
    <property type="project" value="TreeGrafter"/>
</dbReference>
<dbReference type="CDD" id="cd04164">
    <property type="entry name" value="trmE"/>
    <property type="match status" value="1"/>
</dbReference>
<dbReference type="CDD" id="cd14858">
    <property type="entry name" value="TrmE_N"/>
    <property type="match status" value="1"/>
</dbReference>
<dbReference type="Gene3D" id="3.40.50.300">
    <property type="entry name" value="P-loop containing nucleotide triphosphate hydrolases"/>
    <property type="match status" value="1"/>
</dbReference>
<dbReference type="Gene3D" id="3.30.1360.120">
    <property type="entry name" value="Probable tRNA modification gtpase trme, domain 1"/>
    <property type="match status" value="1"/>
</dbReference>
<dbReference type="Gene3D" id="1.20.120.430">
    <property type="entry name" value="tRNA modification GTPase MnmE domain 2"/>
    <property type="match status" value="1"/>
</dbReference>
<dbReference type="HAMAP" id="MF_00379">
    <property type="entry name" value="GTPase_MnmE"/>
    <property type="match status" value="1"/>
</dbReference>
<dbReference type="InterPro" id="IPR031168">
    <property type="entry name" value="G_TrmE"/>
</dbReference>
<dbReference type="InterPro" id="IPR006073">
    <property type="entry name" value="GTP-bd"/>
</dbReference>
<dbReference type="InterPro" id="IPR018948">
    <property type="entry name" value="GTP-bd_TrmE_N"/>
</dbReference>
<dbReference type="InterPro" id="IPR004520">
    <property type="entry name" value="GTPase_MnmE"/>
</dbReference>
<dbReference type="InterPro" id="IPR027368">
    <property type="entry name" value="MnmE_dom2"/>
</dbReference>
<dbReference type="InterPro" id="IPR025867">
    <property type="entry name" value="MnmE_helical"/>
</dbReference>
<dbReference type="InterPro" id="IPR027417">
    <property type="entry name" value="P-loop_NTPase"/>
</dbReference>
<dbReference type="InterPro" id="IPR005225">
    <property type="entry name" value="Small_GTP-bd"/>
</dbReference>
<dbReference type="InterPro" id="IPR027266">
    <property type="entry name" value="TrmE/GcvT_dom1"/>
</dbReference>
<dbReference type="NCBIfam" id="TIGR00450">
    <property type="entry name" value="mnmE_trmE_thdF"/>
    <property type="match status" value="1"/>
</dbReference>
<dbReference type="NCBIfam" id="TIGR00231">
    <property type="entry name" value="small_GTP"/>
    <property type="match status" value="1"/>
</dbReference>
<dbReference type="PANTHER" id="PTHR42714">
    <property type="entry name" value="TRNA MODIFICATION GTPASE GTPBP3"/>
    <property type="match status" value="1"/>
</dbReference>
<dbReference type="PANTHER" id="PTHR42714:SF2">
    <property type="entry name" value="TRNA MODIFICATION GTPASE GTPBP3, MITOCHONDRIAL"/>
    <property type="match status" value="1"/>
</dbReference>
<dbReference type="Pfam" id="PF01926">
    <property type="entry name" value="MMR_HSR1"/>
    <property type="match status" value="1"/>
</dbReference>
<dbReference type="Pfam" id="PF12631">
    <property type="entry name" value="MnmE_helical"/>
    <property type="match status" value="1"/>
</dbReference>
<dbReference type="Pfam" id="PF10396">
    <property type="entry name" value="TrmE_N"/>
    <property type="match status" value="1"/>
</dbReference>
<dbReference type="PRINTS" id="PR00449">
    <property type="entry name" value="RASTRNSFRMNG"/>
</dbReference>
<dbReference type="SUPFAM" id="SSF52540">
    <property type="entry name" value="P-loop containing nucleoside triphosphate hydrolases"/>
    <property type="match status" value="1"/>
</dbReference>
<dbReference type="PROSITE" id="PS51709">
    <property type="entry name" value="G_TRME"/>
    <property type="match status" value="1"/>
</dbReference>
<name>MNME_PARMW</name>
<sequence length="450" mass="47812">MNASDTIAAVATAVAPGQGGIAVVRVSGPAAEATGRSVVHCPGRQVCGSHRVMYGHVIDGEGRRLDEVLLLLMRGPRSFTGEDVVEIHCHGGVVAVQQVLERVLAHPGVRRALPGEFSQRAVLNGRLDLTRAEAVSELVAARSRRAAELAMAGLDGGIQAKITALRERLLDQLTELEARVDFEEDLPPLDGDALLDGLQQVRQALLTLVADGERADALRSGLRVALVGRPNVGKSSLLNRLSRRERAIVTELPGTTRDLLESEIVLEGVPITLLDTAGIRSTDDAVEQLGIARSEEALATADVVLLVLDGHAGWTAEDAALLARIPEHIPRILVANKADLPAGALPQPVDVQLSALEGTGEEDLVQALLERCGAAGTEGVLLALNERQRDLAATAAAALGRSQEVAAQQLPWDFWTIDLREAIRALGEITGEELTEAVLDRVFSRFCIGK</sequence>
<keyword id="KW-0963">Cytoplasm</keyword>
<keyword id="KW-0342">GTP-binding</keyword>
<keyword id="KW-0378">Hydrolase</keyword>
<keyword id="KW-0460">Magnesium</keyword>
<keyword id="KW-0479">Metal-binding</keyword>
<keyword id="KW-0547">Nucleotide-binding</keyword>
<keyword id="KW-0630">Potassium</keyword>
<keyword id="KW-0819">tRNA processing</keyword>
<accession>Q7U3V6</accession>
<feature type="chain" id="PRO_0000188937" description="tRNA modification GTPase MnmE">
    <location>
        <begin position="1"/>
        <end position="450"/>
    </location>
</feature>
<feature type="domain" description="TrmE-type G">
    <location>
        <begin position="221"/>
        <end position="373"/>
    </location>
</feature>
<feature type="binding site" evidence="1">
    <location>
        <position position="25"/>
    </location>
    <ligand>
        <name>(6S)-5-formyl-5,6,7,8-tetrahydrofolate</name>
        <dbReference type="ChEBI" id="CHEBI:57457"/>
    </ligand>
</feature>
<feature type="binding site" evidence="1">
    <location>
        <position position="86"/>
    </location>
    <ligand>
        <name>(6S)-5-formyl-5,6,7,8-tetrahydrofolate</name>
        <dbReference type="ChEBI" id="CHEBI:57457"/>
    </ligand>
</feature>
<feature type="binding site" evidence="1">
    <location>
        <position position="126"/>
    </location>
    <ligand>
        <name>(6S)-5-formyl-5,6,7,8-tetrahydrofolate</name>
        <dbReference type="ChEBI" id="CHEBI:57457"/>
    </ligand>
</feature>
<feature type="binding site" evidence="1">
    <location>
        <begin position="231"/>
        <end position="236"/>
    </location>
    <ligand>
        <name>GTP</name>
        <dbReference type="ChEBI" id="CHEBI:37565"/>
    </ligand>
</feature>
<feature type="binding site" evidence="1">
    <location>
        <position position="231"/>
    </location>
    <ligand>
        <name>K(+)</name>
        <dbReference type="ChEBI" id="CHEBI:29103"/>
    </ligand>
</feature>
<feature type="binding site" evidence="1">
    <location>
        <position position="235"/>
    </location>
    <ligand>
        <name>Mg(2+)</name>
        <dbReference type="ChEBI" id="CHEBI:18420"/>
    </ligand>
</feature>
<feature type="binding site" evidence="1">
    <location>
        <begin position="250"/>
        <end position="256"/>
    </location>
    <ligand>
        <name>GTP</name>
        <dbReference type="ChEBI" id="CHEBI:37565"/>
    </ligand>
</feature>
<feature type="binding site" evidence="1">
    <location>
        <position position="250"/>
    </location>
    <ligand>
        <name>K(+)</name>
        <dbReference type="ChEBI" id="CHEBI:29103"/>
    </ligand>
</feature>
<feature type="binding site" evidence="1">
    <location>
        <position position="252"/>
    </location>
    <ligand>
        <name>K(+)</name>
        <dbReference type="ChEBI" id="CHEBI:29103"/>
    </ligand>
</feature>
<feature type="binding site" evidence="1">
    <location>
        <position position="255"/>
    </location>
    <ligand>
        <name>K(+)</name>
        <dbReference type="ChEBI" id="CHEBI:29103"/>
    </ligand>
</feature>
<feature type="binding site" evidence="1">
    <location>
        <position position="256"/>
    </location>
    <ligand>
        <name>Mg(2+)</name>
        <dbReference type="ChEBI" id="CHEBI:18420"/>
    </ligand>
</feature>
<feature type="binding site" evidence="1">
    <location>
        <begin position="275"/>
        <end position="278"/>
    </location>
    <ligand>
        <name>GTP</name>
        <dbReference type="ChEBI" id="CHEBI:37565"/>
    </ligand>
</feature>
<feature type="binding site" evidence="1">
    <location>
        <begin position="336"/>
        <end position="339"/>
    </location>
    <ligand>
        <name>GTP</name>
        <dbReference type="ChEBI" id="CHEBI:37565"/>
    </ligand>
</feature>
<feature type="binding site" evidence="1">
    <location>
        <position position="450"/>
    </location>
    <ligand>
        <name>(6S)-5-formyl-5,6,7,8-tetrahydrofolate</name>
        <dbReference type="ChEBI" id="CHEBI:57457"/>
    </ligand>
</feature>
<evidence type="ECO:0000255" key="1">
    <source>
        <dbReference type="HAMAP-Rule" id="MF_00379"/>
    </source>
</evidence>
<proteinExistence type="inferred from homology"/>
<reference key="1">
    <citation type="journal article" date="2003" name="Nature">
        <title>The genome of a motile marine Synechococcus.</title>
        <authorList>
            <person name="Palenik B."/>
            <person name="Brahamsha B."/>
            <person name="Larimer F.W."/>
            <person name="Land M.L."/>
            <person name="Hauser L."/>
            <person name="Chain P."/>
            <person name="Lamerdin J.E."/>
            <person name="Regala W."/>
            <person name="Allen E.E."/>
            <person name="McCarren J."/>
            <person name="Paulsen I.T."/>
            <person name="Dufresne A."/>
            <person name="Partensky F."/>
            <person name="Webb E.A."/>
            <person name="Waterbury J."/>
        </authorList>
    </citation>
    <scope>NUCLEOTIDE SEQUENCE [LARGE SCALE GENOMIC DNA]</scope>
    <source>
        <strain>WH8102</strain>
    </source>
</reference>
<comment type="function">
    <text evidence="1">Exhibits a very high intrinsic GTPase hydrolysis rate. Involved in the addition of a carboxymethylaminomethyl (cmnm) group at the wobble position (U34) of certain tRNAs, forming tRNA-cmnm(5)s(2)U34.</text>
</comment>
<comment type="cofactor">
    <cofactor evidence="1">
        <name>K(+)</name>
        <dbReference type="ChEBI" id="CHEBI:29103"/>
    </cofactor>
    <text evidence="1">Binds 1 potassium ion per subunit.</text>
</comment>
<comment type="subunit">
    <text evidence="1">Homodimer. Heterotetramer of two MnmE and two MnmG subunits.</text>
</comment>
<comment type="subcellular location">
    <subcellularLocation>
        <location evidence="1">Cytoplasm</location>
    </subcellularLocation>
</comment>
<comment type="similarity">
    <text evidence="1">Belongs to the TRAFAC class TrmE-Era-EngA-EngB-Septin-like GTPase superfamily. TrmE GTPase family.</text>
</comment>
<protein>
    <recommendedName>
        <fullName evidence="1">tRNA modification GTPase MnmE</fullName>
        <ecNumber evidence="1">3.6.-.-</ecNumber>
    </recommendedName>
</protein>